<dbReference type="EC" id="2.8.1.7" evidence="1"/>
<dbReference type="EMBL" id="CP001131">
    <property type="protein sequence ID" value="ACG71866.1"/>
    <property type="molecule type" value="Genomic_DNA"/>
</dbReference>
<dbReference type="RefSeq" id="WP_012524698.1">
    <property type="nucleotide sequence ID" value="NC_011145.1"/>
</dbReference>
<dbReference type="SMR" id="B4UCP2"/>
<dbReference type="KEGG" id="ank:AnaeK_0627"/>
<dbReference type="HOGENOM" id="CLU_003433_0_2_7"/>
<dbReference type="OrthoDB" id="9808002at2"/>
<dbReference type="UniPathway" id="UPA00266"/>
<dbReference type="Proteomes" id="UP000001871">
    <property type="component" value="Chromosome"/>
</dbReference>
<dbReference type="GO" id="GO:1990221">
    <property type="term" value="C:L-cysteine desulfurase complex"/>
    <property type="evidence" value="ECO:0007669"/>
    <property type="project" value="UniProtKB-ARBA"/>
</dbReference>
<dbReference type="GO" id="GO:0051537">
    <property type="term" value="F:2 iron, 2 sulfur cluster binding"/>
    <property type="evidence" value="ECO:0007669"/>
    <property type="project" value="UniProtKB-UniRule"/>
</dbReference>
<dbReference type="GO" id="GO:0031071">
    <property type="term" value="F:cysteine desulfurase activity"/>
    <property type="evidence" value="ECO:0007669"/>
    <property type="project" value="UniProtKB-UniRule"/>
</dbReference>
<dbReference type="GO" id="GO:0046872">
    <property type="term" value="F:metal ion binding"/>
    <property type="evidence" value="ECO:0007669"/>
    <property type="project" value="UniProtKB-KW"/>
</dbReference>
<dbReference type="GO" id="GO:0030170">
    <property type="term" value="F:pyridoxal phosphate binding"/>
    <property type="evidence" value="ECO:0007669"/>
    <property type="project" value="UniProtKB-UniRule"/>
</dbReference>
<dbReference type="GO" id="GO:0044571">
    <property type="term" value="P:[2Fe-2S] cluster assembly"/>
    <property type="evidence" value="ECO:0007669"/>
    <property type="project" value="UniProtKB-UniRule"/>
</dbReference>
<dbReference type="FunFam" id="3.40.640.10:FF:000003">
    <property type="entry name" value="Cysteine desulfurase IscS"/>
    <property type="match status" value="1"/>
</dbReference>
<dbReference type="FunFam" id="3.90.1150.10:FF:000002">
    <property type="entry name" value="Cysteine desulfurase IscS"/>
    <property type="match status" value="1"/>
</dbReference>
<dbReference type="Gene3D" id="3.90.1150.10">
    <property type="entry name" value="Aspartate Aminotransferase, domain 1"/>
    <property type="match status" value="1"/>
</dbReference>
<dbReference type="Gene3D" id="3.40.640.10">
    <property type="entry name" value="Type I PLP-dependent aspartate aminotransferase-like (Major domain)"/>
    <property type="match status" value="1"/>
</dbReference>
<dbReference type="HAMAP" id="MF_00331">
    <property type="entry name" value="Cys_desulf_IscS"/>
    <property type="match status" value="1"/>
</dbReference>
<dbReference type="InterPro" id="IPR000192">
    <property type="entry name" value="Aminotrans_V_dom"/>
</dbReference>
<dbReference type="InterPro" id="IPR020578">
    <property type="entry name" value="Aminotrans_V_PyrdxlP_BS"/>
</dbReference>
<dbReference type="InterPro" id="IPR010240">
    <property type="entry name" value="Cys_deSase_IscS"/>
</dbReference>
<dbReference type="InterPro" id="IPR016454">
    <property type="entry name" value="Cysteine_dSase"/>
</dbReference>
<dbReference type="InterPro" id="IPR015424">
    <property type="entry name" value="PyrdxlP-dep_Trfase"/>
</dbReference>
<dbReference type="InterPro" id="IPR015421">
    <property type="entry name" value="PyrdxlP-dep_Trfase_major"/>
</dbReference>
<dbReference type="InterPro" id="IPR015422">
    <property type="entry name" value="PyrdxlP-dep_Trfase_small"/>
</dbReference>
<dbReference type="NCBIfam" id="TIGR02006">
    <property type="entry name" value="IscS"/>
    <property type="match status" value="1"/>
</dbReference>
<dbReference type="NCBIfam" id="NF002806">
    <property type="entry name" value="PRK02948.1"/>
    <property type="match status" value="1"/>
</dbReference>
<dbReference type="NCBIfam" id="NF010611">
    <property type="entry name" value="PRK14012.1"/>
    <property type="match status" value="1"/>
</dbReference>
<dbReference type="PANTHER" id="PTHR11601:SF34">
    <property type="entry name" value="CYSTEINE DESULFURASE"/>
    <property type="match status" value="1"/>
</dbReference>
<dbReference type="PANTHER" id="PTHR11601">
    <property type="entry name" value="CYSTEINE DESULFURYLASE FAMILY MEMBER"/>
    <property type="match status" value="1"/>
</dbReference>
<dbReference type="Pfam" id="PF00266">
    <property type="entry name" value="Aminotran_5"/>
    <property type="match status" value="1"/>
</dbReference>
<dbReference type="PIRSF" id="PIRSF005572">
    <property type="entry name" value="NifS"/>
    <property type="match status" value="1"/>
</dbReference>
<dbReference type="SUPFAM" id="SSF53383">
    <property type="entry name" value="PLP-dependent transferases"/>
    <property type="match status" value="1"/>
</dbReference>
<dbReference type="PROSITE" id="PS00595">
    <property type="entry name" value="AA_TRANSFER_CLASS_5"/>
    <property type="match status" value="1"/>
</dbReference>
<proteinExistence type="inferred from homology"/>
<evidence type="ECO:0000255" key="1">
    <source>
        <dbReference type="HAMAP-Rule" id="MF_00331"/>
    </source>
</evidence>
<organism>
    <name type="scientific">Anaeromyxobacter sp. (strain K)</name>
    <dbReference type="NCBI Taxonomy" id="447217"/>
    <lineage>
        <taxon>Bacteria</taxon>
        <taxon>Pseudomonadati</taxon>
        <taxon>Myxococcota</taxon>
        <taxon>Myxococcia</taxon>
        <taxon>Myxococcales</taxon>
        <taxon>Cystobacterineae</taxon>
        <taxon>Anaeromyxobacteraceae</taxon>
        <taxon>Anaeromyxobacter</taxon>
    </lineage>
</organism>
<name>ISCS_ANASK</name>
<reference key="1">
    <citation type="submission" date="2008-08" db="EMBL/GenBank/DDBJ databases">
        <title>Complete sequence of Anaeromyxobacter sp. K.</title>
        <authorList>
            <consortium name="US DOE Joint Genome Institute"/>
            <person name="Lucas S."/>
            <person name="Copeland A."/>
            <person name="Lapidus A."/>
            <person name="Glavina del Rio T."/>
            <person name="Dalin E."/>
            <person name="Tice H."/>
            <person name="Bruce D."/>
            <person name="Goodwin L."/>
            <person name="Pitluck S."/>
            <person name="Saunders E."/>
            <person name="Brettin T."/>
            <person name="Detter J.C."/>
            <person name="Han C."/>
            <person name="Larimer F."/>
            <person name="Land M."/>
            <person name="Hauser L."/>
            <person name="Kyrpides N."/>
            <person name="Ovchinnikiva G."/>
            <person name="Beliaev A."/>
        </authorList>
    </citation>
    <scope>NUCLEOTIDE SEQUENCE [LARGE SCALE GENOMIC DNA]</scope>
    <source>
        <strain>K</strain>
    </source>
</reference>
<feature type="chain" id="PRO_1000119619" description="Cysteine desulfurase IscS">
    <location>
        <begin position="1"/>
        <end position="404"/>
    </location>
</feature>
<feature type="active site" description="Cysteine persulfide intermediate" evidence="1">
    <location>
        <position position="327"/>
    </location>
</feature>
<feature type="binding site" evidence="1">
    <location>
        <begin position="73"/>
        <end position="74"/>
    </location>
    <ligand>
        <name>pyridoxal 5'-phosphate</name>
        <dbReference type="ChEBI" id="CHEBI:597326"/>
    </ligand>
</feature>
<feature type="binding site" evidence="1">
    <location>
        <position position="153"/>
    </location>
    <ligand>
        <name>pyridoxal 5'-phosphate</name>
        <dbReference type="ChEBI" id="CHEBI:597326"/>
    </ligand>
</feature>
<feature type="binding site" evidence="1">
    <location>
        <position position="181"/>
    </location>
    <ligand>
        <name>pyridoxal 5'-phosphate</name>
        <dbReference type="ChEBI" id="CHEBI:597326"/>
    </ligand>
</feature>
<feature type="binding site" evidence="1">
    <location>
        <begin position="201"/>
        <end position="203"/>
    </location>
    <ligand>
        <name>pyridoxal 5'-phosphate</name>
        <dbReference type="ChEBI" id="CHEBI:597326"/>
    </ligand>
</feature>
<feature type="binding site" evidence="1">
    <location>
        <position position="241"/>
    </location>
    <ligand>
        <name>pyridoxal 5'-phosphate</name>
        <dbReference type="ChEBI" id="CHEBI:597326"/>
    </ligand>
</feature>
<feature type="binding site" description="via persulfide group" evidence="1">
    <location>
        <position position="327"/>
    </location>
    <ligand>
        <name>[2Fe-2S] cluster</name>
        <dbReference type="ChEBI" id="CHEBI:190135"/>
        <note>ligand shared with IscU</note>
    </ligand>
</feature>
<feature type="modified residue" description="N6-(pyridoxal phosphate)lysine" evidence="1">
    <location>
        <position position="204"/>
    </location>
</feature>
<gene>
    <name evidence="1" type="primary">iscS</name>
    <name type="ordered locus">AnaeK_0627</name>
</gene>
<sequence>MKIPIYMDYHATTPVDPRVLEAMLPYFTTEYGNAASKSHAFGWKAEEAVEAAREEVAKLIGASAKEIVWTSGATESDNLAVKGAAHFYQAKGKHLVTCKTEHKAVLDSMHALERQGFEVTFLEPERDGRLDPAKVKAALRPDTILVSVMHANNETGVVHPIAEIGRIAREAGVVFHCDAVQSIGKIPFDVEAMNVDLASISAHKMYGPKGMGALYVRRKPRVRLVAEMDGGGHERGFRSGTLNVPGIVGMGKAAELARLERDAEAVRVTALRERLRKGLEKELDLLTVNGSLEHRVPGNLNVSFAYVEGEALMMAVKDVAVSSGSACTSASLEPSYVLRAMGVSEDLAHSSIRFGLGRFSTEEEVDYAIRLFGEKVRKLREMSPLYEMVKDGVDLNQIEWANPH</sequence>
<keyword id="KW-0001">2Fe-2S</keyword>
<keyword id="KW-0963">Cytoplasm</keyword>
<keyword id="KW-0408">Iron</keyword>
<keyword id="KW-0411">Iron-sulfur</keyword>
<keyword id="KW-0479">Metal-binding</keyword>
<keyword id="KW-0663">Pyridoxal phosphate</keyword>
<keyword id="KW-0808">Transferase</keyword>
<comment type="function">
    <text evidence="1">Master enzyme that delivers sulfur to a number of partners involved in Fe-S cluster assembly, tRNA modification or cofactor biosynthesis. Catalyzes the removal of elemental sulfur atoms from cysteine to produce alanine. Functions as a sulfur delivery protein for Fe-S cluster synthesis onto IscU, an Fe-S scaffold assembly protein, as well as other S acceptor proteins.</text>
</comment>
<comment type="catalytic activity">
    <reaction evidence="1">
        <text>(sulfur carrier)-H + L-cysteine = (sulfur carrier)-SH + L-alanine</text>
        <dbReference type="Rhea" id="RHEA:43892"/>
        <dbReference type="Rhea" id="RHEA-COMP:14737"/>
        <dbReference type="Rhea" id="RHEA-COMP:14739"/>
        <dbReference type="ChEBI" id="CHEBI:29917"/>
        <dbReference type="ChEBI" id="CHEBI:35235"/>
        <dbReference type="ChEBI" id="CHEBI:57972"/>
        <dbReference type="ChEBI" id="CHEBI:64428"/>
        <dbReference type="EC" id="2.8.1.7"/>
    </reaction>
</comment>
<comment type="cofactor">
    <cofactor evidence="1">
        <name>pyridoxal 5'-phosphate</name>
        <dbReference type="ChEBI" id="CHEBI:597326"/>
    </cofactor>
</comment>
<comment type="pathway">
    <text evidence="1">Cofactor biosynthesis; iron-sulfur cluster biosynthesis.</text>
</comment>
<comment type="subunit">
    <text evidence="1">Homodimer. Forms a heterotetramer with IscU, interacts with other sulfur acceptors.</text>
</comment>
<comment type="subcellular location">
    <subcellularLocation>
        <location evidence="1">Cytoplasm</location>
    </subcellularLocation>
</comment>
<comment type="similarity">
    <text evidence="1">Belongs to the class-V pyridoxal-phosphate-dependent aminotransferase family. NifS/IscS subfamily.</text>
</comment>
<accession>B4UCP2</accession>
<protein>
    <recommendedName>
        <fullName evidence="1">Cysteine desulfurase IscS</fullName>
        <ecNumber evidence="1">2.8.1.7</ecNumber>
    </recommendedName>
</protein>